<proteinExistence type="inferred from homology"/>
<name>CCME_SHESH</name>
<gene>
    <name evidence="1" type="primary">ccmE</name>
    <name evidence="1" type="synonym">cycJ</name>
    <name type="ordered locus">Ssed_4291</name>
</gene>
<protein>
    <recommendedName>
        <fullName evidence="1">Cytochrome c-type biogenesis protein CcmE</fullName>
    </recommendedName>
    <alternativeName>
        <fullName evidence="1">Cytochrome c maturation protein E</fullName>
    </alternativeName>
    <alternativeName>
        <fullName evidence="1">Heme chaperone CcmE</fullName>
    </alternativeName>
</protein>
<reference key="1">
    <citation type="submission" date="2007-08" db="EMBL/GenBank/DDBJ databases">
        <title>Complete sequence of Shewanella sediminis HAW-EB3.</title>
        <authorList>
            <consortium name="US DOE Joint Genome Institute"/>
            <person name="Copeland A."/>
            <person name="Lucas S."/>
            <person name="Lapidus A."/>
            <person name="Barry K."/>
            <person name="Glavina del Rio T."/>
            <person name="Dalin E."/>
            <person name="Tice H."/>
            <person name="Pitluck S."/>
            <person name="Chertkov O."/>
            <person name="Brettin T."/>
            <person name="Bruce D."/>
            <person name="Detter J.C."/>
            <person name="Han C."/>
            <person name="Schmutz J."/>
            <person name="Larimer F."/>
            <person name="Land M."/>
            <person name="Hauser L."/>
            <person name="Kyrpides N."/>
            <person name="Kim E."/>
            <person name="Zhao J.-S."/>
            <person name="Richardson P."/>
        </authorList>
    </citation>
    <scope>NUCLEOTIDE SEQUENCE [LARGE SCALE GENOMIC DNA]</scope>
    <source>
        <strain>HAW-EB3</strain>
    </source>
</reference>
<accession>A8G1C2</accession>
<sequence>MNARRKKRLTLAVALIGGVAAIASLLLYALNSNLNLFYTPTEIVQGKKDTGVLPEVGQRIRVGGMVTIGSMVRDPDSLHVEFAVHDAAGGEILVTYDDLLPDLFREGQGIVAQGVLIEGGKLQATEVLAKHDENYMPPEVAEAMGQTHEKLDYNEQQKTSY</sequence>
<keyword id="KW-0997">Cell inner membrane</keyword>
<keyword id="KW-1003">Cell membrane</keyword>
<keyword id="KW-0201">Cytochrome c-type biogenesis</keyword>
<keyword id="KW-0349">Heme</keyword>
<keyword id="KW-0408">Iron</keyword>
<keyword id="KW-0472">Membrane</keyword>
<keyword id="KW-0479">Metal-binding</keyword>
<keyword id="KW-1185">Reference proteome</keyword>
<keyword id="KW-0735">Signal-anchor</keyword>
<keyword id="KW-0812">Transmembrane</keyword>
<keyword id="KW-1133">Transmembrane helix</keyword>
<organism>
    <name type="scientific">Shewanella sediminis (strain HAW-EB3)</name>
    <dbReference type="NCBI Taxonomy" id="425104"/>
    <lineage>
        <taxon>Bacteria</taxon>
        <taxon>Pseudomonadati</taxon>
        <taxon>Pseudomonadota</taxon>
        <taxon>Gammaproteobacteria</taxon>
        <taxon>Alteromonadales</taxon>
        <taxon>Shewanellaceae</taxon>
        <taxon>Shewanella</taxon>
    </lineage>
</organism>
<comment type="function">
    <text evidence="1">Heme chaperone required for the biogenesis of c-type cytochromes. Transiently binds heme delivered by CcmC and transfers the heme to apo-cytochromes in a process facilitated by CcmF and CcmH.</text>
</comment>
<comment type="subcellular location">
    <subcellularLocation>
        <location evidence="1">Cell inner membrane</location>
        <topology evidence="1">Single-pass type II membrane protein</topology>
        <orientation evidence="1">Periplasmic side</orientation>
    </subcellularLocation>
</comment>
<comment type="similarity">
    <text evidence="1">Belongs to the CcmE/CycJ family.</text>
</comment>
<dbReference type="EMBL" id="CP000821">
    <property type="protein sequence ID" value="ABV38895.1"/>
    <property type="molecule type" value="Genomic_DNA"/>
</dbReference>
<dbReference type="RefSeq" id="WP_012144624.1">
    <property type="nucleotide sequence ID" value="NC_009831.1"/>
</dbReference>
<dbReference type="SMR" id="A8G1C2"/>
<dbReference type="STRING" id="425104.Ssed_4291"/>
<dbReference type="KEGG" id="sse:Ssed_4291"/>
<dbReference type="eggNOG" id="COG2332">
    <property type="taxonomic scope" value="Bacteria"/>
</dbReference>
<dbReference type="HOGENOM" id="CLU_079503_1_0_6"/>
<dbReference type="OrthoDB" id="9793584at2"/>
<dbReference type="Proteomes" id="UP000002015">
    <property type="component" value="Chromosome"/>
</dbReference>
<dbReference type="GO" id="GO:0005886">
    <property type="term" value="C:plasma membrane"/>
    <property type="evidence" value="ECO:0007669"/>
    <property type="project" value="UniProtKB-SubCell"/>
</dbReference>
<dbReference type="GO" id="GO:0020037">
    <property type="term" value="F:heme binding"/>
    <property type="evidence" value="ECO:0007669"/>
    <property type="project" value="InterPro"/>
</dbReference>
<dbReference type="GO" id="GO:0046872">
    <property type="term" value="F:metal ion binding"/>
    <property type="evidence" value="ECO:0007669"/>
    <property type="project" value="UniProtKB-KW"/>
</dbReference>
<dbReference type="GO" id="GO:0017004">
    <property type="term" value="P:cytochrome complex assembly"/>
    <property type="evidence" value="ECO:0007669"/>
    <property type="project" value="UniProtKB-KW"/>
</dbReference>
<dbReference type="FunFam" id="2.40.50.140:FF:000104">
    <property type="entry name" value="Cytochrome c-type biogenesis protein CcmE"/>
    <property type="match status" value="1"/>
</dbReference>
<dbReference type="Gene3D" id="2.40.50.140">
    <property type="entry name" value="Nucleic acid-binding proteins"/>
    <property type="match status" value="1"/>
</dbReference>
<dbReference type="HAMAP" id="MF_01959">
    <property type="entry name" value="CcmE"/>
    <property type="match status" value="1"/>
</dbReference>
<dbReference type="InterPro" id="IPR004329">
    <property type="entry name" value="CcmE"/>
</dbReference>
<dbReference type="InterPro" id="IPR036127">
    <property type="entry name" value="CcmE-like_sf"/>
</dbReference>
<dbReference type="InterPro" id="IPR012340">
    <property type="entry name" value="NA-bd_OB-fold"/>
</dbReference>
<dbReference type="NCBIfam" id="NF009638">
    <property type="entry name" value="PRK13165.1"/>
    <property type="match status" value="1"/>
</dbReference>
<dbReference type="NCBIfam" id="NF009729">
    <property type="entry name" value="PRK13254.1-3"/>
    <property type="match status" value="1"/>
</dbReference>
<dbReference type="PANTHER" id="PTHR34128">
    <property type="entry name" value="CYTOCHROME C-TYPE BIOGENESIS PROTEIN CCME HOMOLOG, MITOCHONDRIAL"/>
    <property type="match status" value="1"/>
</dbReference>
<dbReference type="PANTHER" id="PTHR34128:SF2">
    <property type="entry name" value="CYTOCHROME C-TYPE BIOGENESIS PROTEIN CCME HOMOLOG, MITOCHONDRIAL"/>
    <property type="match status" value="1"/>
</dbReference>
<dbReference type="Pfam" id="PF03100">
    <property type="entry name" value="CcmE"/>
    <property type="match status" value="1"/>
</dbReference>
<dbReference type="SUPFAM" id="SSF82093">
    <property type="entry name" value="Heme chaperone CcmE"/>
    <property type="match status" value="1"/>
</dbReference>
<feature type="chain" id="PRO_1000088534" description="Cytochrome c-type biogenesis protein CcmE">
    <location>
        <begin position="1"/>
        <end position="161"/>
    </location>
</feature>
<feature type="topological domain" description="Cytoplasmic" evidence="1">
    <location>
        <begin position="1"/>
        <end position="8"/>
    </location>
</feature>
<feature type="transmembrane region" description="Helical; Signal-anchor for type II membrane protein" evidence="1">
    <location>
        <begin position="9"/>
        <end position="29"/>
    </location>
</feature>
<feature type="topological domain" description="Periplasmic" evidence="1">
    <location>
        <begin position="30"/>
        <end position="161"/>
    </location>
</feature>
<feature type="binding site" description="covalent" evidence="1">
    <location>
        <position position="131"/>
    </location>
    <ligand>
        <name>heme</name>
        <dbReference type="ChEBI" id="CHEBI:30413"/>
    </ligand>
</feature>
<feature type="binding site" description="axial binding residue" evidence="1">
    <location>
        <position position="135"/>
    </location>
    <ligand>
        <name>heme</name>
        <dbReference type="ChEBI" id="CHEBI:30413"/>
    </ligand>
    <ligandPart>
        <name>Fe</name>
        <dbReference type="ChEBI" id="CHEBI:18248"/>
    </ligandPart>
</feature>
<evidence type="ECO:0000255" key="1">
    <source>
        <dbReference type="HAMAP-Rule" id="MF_01959"/>
    </source>
</evidence>